<dbReference type="EC" id="4.2.1.33" evidence="1"/>
<dbReference type="EMBL" id="CP000672">
    <property type="protein sequence ID" value="ABR00532.1"/>
    <property type="molecule type" value="Genomic_DNA"/>
</dbReference>
<dbReference type="SMR" id="A5UIC6"/>
<dbReference type="KEGG" id="hiq:CGSHiGG_08530"/>
<dbReference type="HOGENOM" id="CLU_081378_0_3_6"/>
<dbReference type="UniPathway" id="UPA00048">
    <property type="reaction ID" value="UER00071"/>
</dbReference>
<dbReference type="Proteomes" id="UP000001990">
    <property type="component" value="Chromosome"/>
</dbReference>
<dbReference type="GO" id="GO:0009316">
    <property type="term" value="C:3-isopropylmalate dehydratase complex"/>
    <property type="evidence" value="ECO:0007669"/>
    <property type="project" value="InterPro"/>
</dbReference>
<dbReference type="GO" id="GO:0003861">
    <property type="term" value="F:3-isopropylmalate dehydratase activity"/>
    <property type="evidence" value="ECO:0007669"/>
    <property type="project" value="UniProtKB-UniRule"/>
</dbReference>
<dbReference type="GO" id="GO:0009098">
    <property type="term" value="P:L-leucine biosynthetic process"/>
    <property type="evidence" value="ECO:0007669"/>
    <property type="project" value="UniProtKB-UniRule"/>
</dbReference>
<dbReference type="CDD" id="cd01577">
    <property type="entry name" value="IPMI_Swivel"/>
    <property type="match status" value="1"/>
</dbReference>
<dbReference type="FunFam" id="3.20.19.10:FF:000003">
    <property type="entry name" value="3-isopropylmalate dehydratase small subunit"/>
    <property type="match status" value="1"/>
</dbReference>
<dbReference type="Gene3D" id="3.20.19.10">
    <property type="entry name" value="Aconitase, domain 4"/>
    <property type="match status" value="1"/>
</dbReference>
<dbReference type="HAMAP" id="MF_01031">
    <property type="entry name" value="LeuD_type1"/>
    <property type="match status" value="1"/>
</dbReference>
<dbReference type="InterPro" id="IPR004431">
    <property type="entry name" value="3-IsopropMal_deHydase_ssu"/>
</dbReference>
<dbReference type="InterPro" id="IPR015928">
    <property type="entry name" value="Aconitase/3IPM_dehydase_swvl"/>
</dbReference>
<dbReference type="InterPro" id="IPR000573">
    <property type="entry name" value="AconitaseA/IPMdHydase_ssu_swvl"/>
</dbReference>
<dbReference type="InterPro" id="IPR033940">
    <property type="entry name" value="IPMI_Swivel"/>
</dbReference>
<dbReference type="InterPro" id="IPR050075">
    <property type="entry name" value="LeuD"/>
</dbReference>
<dbReference type="NCBIfam" id="TIGR00171">
    <property type="entry name" value="leuD"/>
    <property type="match status" value="1"/>
</dbReference>
<dbReference type="NCBIfam" id="NF002458">
    <property type="entry name" value="PRK01641.1"/>
    <property type="match status" value="1"/>
</dbReference>
<dbReference type="PANTHER" id="PTHR43345:SF5">
    <property type="entry name" value="3-ISOPROPYLMALATE DEHYDRATASE SMALL SUBUNIT"/>
    <property type="match status" value="1"/>
</dbReference>
<dbReference type="PANTHER" id="PTHR43345">
    <property type="entry name" value="3-ISOPROPYLMALATE DEHYDRATASE SMALL SUBUNIT 2-RELATED-RELATED"/>
    <property type="match status" value="1"/>
</dbReference>
<dbReference type="Pfam" id="PF00694">
    <property type="entry name" value="Aconitase_C"/>
    <property type="match status" value="1"/>
</dbReference>
<dbReference type="SUPFAM" id="SSF52016">
    <property type="entry name" value="LeuD/IlvD-like"/>
    <property type="match status" value="1"/>
</dbReference>
<name>LEUD_HAEIG</name>
<keyword id="KW-0028">Amino-acid biosynthesis</keyword>
<keyword id="KW-0100">Branched-chain amino acid biosynthesis</keyword>
<keyword id="KW-0432">Leucine biosynthesis</keyword>
<keyword id="KW-0456">Lyase</keyword>
<proteinExistence type="inferred from homology"/>
<gene>
    <name evidence="1" type="primary">leuD</name>
    <name type="ordered locus">CGSHiGG_08530</name>
</gene>
<sequence length="200" mass="22814">MAGFKQLSGLVVPLDAANVDTDAIIPKQFLQAITRVGFGKHLFHEWRYLDVDGTKPNPEFVLNYPQYQGATILLARKNLGCGSSREHAPWALADYGFKVMIAPSFADIFYNNSLNNHMLPIRLSEEEVEEIFQWVWANESKQIHVDLEAMTVTVGDKVYTFELDEFRRHCLLNGLDNIGLTLQHEDKISAYEKNIPAFLR</sequence>
<organism>
    <name type="scientific">Haemophilus influenzae (strain PittGG)</name>
    <dbReference type="NCBI Taxonomy" id="374931"/>
    <lineage>
        <taxon>Bacteria</taxon>
        <taxon>Pseudomonadati</taxon>
        <taxon>Pseudomonadota</taxon>
        <taxon>Gammaproteobacteria</taxon>
        <taxon>Pasteurellales</taxon>
        <taxon>Pasteurellaceae</taxon>
        <taxon>Haemophilus</taxon>
    </lineage>
</organism>
<accession>A5UIC6</accession>
<protein>
    <recommendedName>
        <fullName evidence="1">3-isopropylmalate dehydratase small subunit</fullName>
        <ecNumber evidence="1">4.2.1.33</ecNumber>
    </recommendedName>
    <alternativeName>
        <fullName evidence="1">Alpha-IPM isomerase</fullName>
        <shortName evidence="1">IPMI</shortName>
    </alternativeName>
    <alternativeName>
        <fullName evidence="1">Isopropylmalate isomerase</fullName>
    </alternativeName>
</protein>
<evidence type="ECO:0000255" key="1">
    <source>
        <dbReference type="HAMAP-Rule" id="MF_01031"/>
    </source>
</evidence>
<comment type="function">
    <text evidence="1">Catalyzes the isomerization between 2-isopropylmalate and 3-isopropylmalate, via the formation of 2-isopropylmaleate.</text>
</comment>
<comment type="catalytic activity">
    <reaction evidence="1">
        <text>(2R,3S)-3-isopropylmalate = (2S)-2-isopropylmalate</text>
        <dbReference type="Rhea" id="RHEA:32287"/>
        <dbReference type="ChEBI" id="CHEBI:1178"/>
        <dbReference type="ChEBI" id="CHEBI:35121"/>
        <dbReference type="EC" id="4.2.1.33"/>
    </reaction>
</comment>
<comment type="pathway">
    <text evidence="1">Amino-acid biosynthesis; L-leucine biosynthesis; L-leucine from 3-methyl-2-oxobutanoate: step 2/4.</text>
</comment>
<comment type="subunit">
    <text evidence="1">Heterodimer of LeuC and LeuD.</text>
</comment>
<comment type="similarity">
    <text evidence="1">Belongs to the LeuD family. LeuD type 1 subfamily.</text>
</comment>
<feature type="chain" id="PRO_1000063772" description="3-isopropylmalate dehydratase small subunit">
    <location>
        <begin position="1"/>
        <end position="200"/>
    </location>
</feature>
<reference key="1">
    <citation type="journal article" date="2007" name="Genome Biol.">
        <title>Characterization and modeling of the Haemophilus influenzae core and supragenomes based on the complete genomic sequences of Rd and 12 clinical nontypeable strains.</title>
        <authorList>
            <person name="Hogg J.S."/>
            <person name="Hu F.Z."/>
            <person name="Janto B."/>
            <person name="Boissy R."/>
            <person name="Hayes J."/>
            <person name="Keefe R."/>
            <person name="Post J.C."/>
            <person name="Ehrlich G.D."/>
        </authorList>
    </citation>
    <scope>NUCLEOTIDE SEQUENCE [LARGE SCALE GENOMIC DNA]</scope>
    <source>
        <strain>PittGG</strain>
    </source>
</reference>